<gene>
    <name type="primary">minE</name>
    <name type="ordered locus">BU325</name>
</gene>
<dbReference type="EMBL" id="BA000003">
    <property type="protein sequence ID" value="BAB13033.1"/>
    <property type="molecule type" value="Genomic_DNA"/>
</dbReference>
<dbReference type="RefSeq" id="NP_240147.1">
    <property type="nucleotide sequence ID" value="NC_002528.1"/>
</dbReference>
<dbReference type="RefSeq" id="WP_010896068.1">
    <property type="nucleotide sequence ID" value="NZ_AP036055.1"/>
</dbReference>
<dbReference type="SMR" id="P57410"/>
<dbReference type="STRING" id="563178.BUAP5A_318"/>
<dbReference type="EnsemblBacteria" id="BAB13033">
    <property type="protein sequence ID" value="BAB13033"/>
    <property type="gene ID" value="BAB13033"/>
</dbReference>
<dbReference type="KEGG" id="buc:BU325"/>
<dbReference type="PATRIC" id="fig|107806.10.peg.337"/>
<dbReference type="eggNOG" id="COG0851">
    <property type="taxonomic scope" value="Bacteria"/>
</dbReference>
<dbReference type="HOGENOM" id="CLU_137929_2_2_6"/>
<dbReference type="Proteomes" id="UP000001806">
    <property type="component" value="Chromosome"/>
</dbReference>
<dbReference type="GO" id="GO:0051301">
    <property type="term" value="P:cell division"/>
    <property type="evidence" value="ECO:0007669"/>
    <property type="project" value="UniProtKB-KW"/>
</dbReference>
<dbReference type="GO" id="GO:0032955">
    <property type="term" value="P:regulation of division septum assembly"/>
    <property type="evidence" value="ECO:0007669"/>
    <property type="project" value="InterPro"/>
</dbReference>
<dbReference type="FunFam" id="3.30.1070.10:FF:000001">
    <property type="entry name" value="Cell division topological specificity factor"/>
    <property type="match status" value="1"/>
</dbReference>
<dbReference type="Gene3D" id="3.30.1070.10">
    <property type="entry name" value="Cell division topological specificity factor MinE"/>
    <property type="match status" value="1"/>
</dbReference>
<dbReference type="HAMAP" id="MF_00262">
    <property type="entry name" value="MinE"/>
    <property type="match status" value="1"/>
</dbReference>
<dbReference type="InterPro" id="IPR005527">
    <property type="entry name" value="MinE"/>
</dbReference>
<dbReference type="InterPro" id="IPR036707">
    <property type="entry name" value="MinE_sf"/>
</dbReference>
<dbReference type="NCBIfam" id="TIGR01215">
    <property type="entry name" value="minE"/>
    <property type="match status" value="1"/>
</dbReference>
<dbReference type="NCBIfam" id="NF001422">
    <property type="entry name" value="PRK00296.1"/>
    <property type="match status" value="1"/>
</dbReference>
<dbReference type="Pfam" id="PF03776">
    <property type="entry name" value="MinE"/>
    <property type="match status" value="1"/>
</dbReference>
<dbReference type="SUPFAM" id="SSF55229">
    <property type="entry name" value="Cell division protein MinE topological specificity domain"/>
    <property type="match status" value="1"/>
</dbReference>
<keyword id="KW-0131">Cell cycle</keyword>
<keyword id="KW-0132">Cell division</keyword>
<keyword id="KW-1185">Reference proteome</keyword>
<name>MINE_BUCAI</name>
<reference key="1">
    <citation type="journal article" date="2000" name="Nature">
        <title>Genome sequence of the endocellular bacterial symbiont of aphids Buchnera sp. APS.</title>
        <authorList>
            <person name="Shigenobu S."/>
            <person name="Watanabe H."/>
            <person name="Hattori M."/>
            <person name="Sakaki Y."/>
            <person name="Ishikawa H."/>
        </authorList>
    </citation>
    <scope>NUCLEOTIDE SEQUENCE [LARGE SCALE GENOMIC DNA]</scope>
    <source>
        <strain>APS</strain>
    </source>
</reference>
<sequence length="83" mass="9736">MALLDFFLSRNKNTANVAKERLQIIVAEQRKYNNEPDYFPQLKREILSVICKYVNIEPNMVTVQLDQKNEDISILELNIILPD</sequence>
<comment type="function">
    <text evidence="1">Prevents the cell division inhibition by proteins MinC and MinD at internal division sites while permitting inhibition at polar sites. This ensures cell division at the proper site by restricting the formation of a division septum at the midpoint of the long axis of the cell (By similarity).</text>
</comment>
<comment type="similarity">
    <text evidence="2">Belongs to the MinE family.</text>
</comment>
<feature type="chain" id="PRO_0000205870" description="Cell division topological specificity factor">
    <location>
        <begin position="1"/>
        <end position="83"/>
    </location>
</feature>
<proteinExistence type="inferred from homology"/>
<protein>
    <recommendedName>
        <fullName>Cell division topological specificity factor</fullName>
    </recommendedName>
</protein>
<evidence type="ECO:0000250" key="1"/>
<evidence type="ECO:0000305" key="2"/>
<accession>P57410</accession>
<organism>
    <name type="scientific">Buchnera aphidicola subsp. Acyrthosiphon pisum (strain APS)</name>
    <name type="common">Acyrthosiphon pisum symbiotic bacterium</name>
    <dbReference type="NCBI Taxonomy" id="107806"/>
    <lineage>
        <taxon>Bacteria</taxon>
        <taxon>Pseudomonadati</taxon>
        <taxon>Pseudomonadota</taxon>
        <taxon>Gammaproteobacteria</taxon>
        <taxon>Enterobacterales</taxon>
        <taxon>Erwiniaceae</taxon>
        <taxon>Buchnera</taxon>
    </lineage>
</organism>